<name>ATP6_STRPN</name>
<comment type="function">
    <text evidence="1">Key component of the proton channel; it plays a direct role in the translocation of protons across the membrane.</text>
</comment>
<comment type="subunit">
    <text evidence="1">F-type ATPases have 2 components, CF(1) - the catalytic core - and CF(0) - the membrane proton channel. CF(1) has five subunits: alpha(3), beta(3), gamma(1), delta(1), epsilon(1). CF(0) has three main subunits: a(1), b(2) and c(9-12). The alpha and beta chains form an alternating ring which encloses part of the gamma chain. CF(1) is attached to CF(0) by a central stalk formed by the gamma and epsilon chains, while a peripheral stalk is formed by the delta and b chains.</text>
</comment>
<comment type="subcellular location">
    <subcellularLocation>
        <location evidence="1">Cell membrane</location>
        <topology evidence="1">Multi-pass membrane protein</topology>
    </subcellularLocation>
</comment>
<comment type="similarity">
    <text evidence="1">Belongs to the ATPase A chain family.</text>
</comment>
<gene>
    <name evidence="1" type="primary">atpB</name>
    <name type="synonym">atpA</name>
    <name type="synonym">uncB</name>
    <name type="ordered locus">SP_1513</name>
</gene>
<proteinExistence type="inferred from homology"/>
<evidence type="ECO:0000255" key="1">
    <source>
        <dbReference type="HAMAP-Rule" id="MF_01393"/>
    </source>
</evidence>
<dbReference type="EMBL" id="AF171002">
    <property type="protein sequence ID" value="AAF85909.1"/>
    <property type="molecule type" value="Genomic_DNA"/>
</dbReference>
<dbReference type="EMBL" id="AF171000">
    <property type="protein sequence ID" value="AAF85905.1"/>
    <property type="molecule type" value="Genomic_DNA"/>
</dbReference>
<dbReference type="EMBL" id="AF171001">
    <property type="protein sequence ID" value="AAF85907.1"/>
    <property type="molecule type" value="Genomic_DNA"/>
</dbReference>
<dbReference type="EMBL" id="AF334396">
    <property type="protein sequence ID" value="AAK77042.1"/>
    <property type="molecule type" value="Genomic_DNA"/>
</dbReference>
<dbReference type="EMBL" id="AF334397">
    <property type="protein sequence ID" value="AAK77046.1"/>
    <property type="molecule type" value="Genomic_DNA"/>
</dbReference>
<dbReference type="EMBL" id="AF334391">
    <property type="protein sequence ID" value="AAK77032.1"/>
    <property type="molecule type" value="Genomic_DNA"/>
</dbReference>
<dbReference type="EMBL" id="AF334392">
    <property type="protein sequence ID" value="AAK77034.1"/>
    <property type="molecule type" value="Genomic_DNA"/>
</dbReference>
<dbReference type="EMBL" id="AF334393">
    <property type="protein sequence ID" value="AAK77036.1"/>
    <property type="molecule type" value="Genomic_DNA"/>
</dbReference>
<dbReference type="EMBL" id="AF334394">
    <property type="protein sequence ID" value="AAK77038.1"/>
    <property type="molecule type" value="Genomic_DNA"/>
</dbReference>
<dbReference type="EMBL" id="AF334395">
    <property type="protein sequence ID" value="AAK77040.1"/>
    <property type="molecule type" value="Genomic_DNA"/>
</dbReference>
<dbReference type="EMBL" id="AE005672">
    <property type="protein sequence ID" value="AAK75604.1"/>
    <property type="molecule type" value="Genomic_DNA"/>
</dbReference>
<dbReference type="PIR" id="C95176">
    <property type="entry name" value="C95176"/>
</dbReference>
<dbReference type="RefSeq" id="WP_000392851.1">
    <property type="nucleotide sequence ID" value="NZ_CP155539.1"/>
</dbReference>
<dbReference type="SMR" id="P0A2Y8"/>
<dbReference type="PaxDb" id="170187-SP_1513"/>
<dbReference type="EnsemblBacteria" id="AAK75604">
    <property type="protein sequence ID" value="AAK75604"/>
    <property type="gene ID" value="SP_1513"/>
</dbReference>
<dbReference type="GeneID" id="45653248"/>
<dbReference type="KEGG" id="spn:SP_1513"/>
<dbReference type="eggNOG" id="COG0356">
    <property type="taxonomic scope" value="Bacteria"/>
</dbReference>
<dbReference type="PhylomeDB" id="P0A2Y8"/>
<dbReference type="BioCyc" id="SPNE170187:G1FZB-1529-MONOMER"/>
<dbReference type="Proteomes" id="UP000000585">
    <property type="component" value="Chromosome"/>
</dbReference>
<dbReference type="GO" id="GO:0005886">
    <property type="term" value="C:plasma membrane"/>
    <property type="evidence" value="ECO:0007669"/>
    <property type="project" value="UniProtKB-SubCell"/>
</dbReference>
<dbReference type="GO" id="GO:0045259">
    <property type="term" value="C:proton-transporting ATP synthase complex"/>
    <property type="evidence" value="ECO:0007669"/>
    <property type="project" value="UniProtKB-KW"/>
</dbReference>
<dbReference type="GO" id="GO:0046933">
    <property type="term" value="F:proton-transporting ATP synthase activity, rotational mechanism"/>
    <property type="evidence" value="ECO:0007669"/>
    <property type="project" value="UniProtKB-UniRule"/>
</dbReference>
<dbReference type="GO" id="GO:0042777">
    <property type="term" value="P:proton motive force-driven plasma membrane ATP synthesis"/>
    <property type="evidence" value="ECO:0007669"/>
    <property type="project" value="TreeGrafter"/>
</dbReference>
<dbReference type="GO" id="GO:0046677">
    <property type="term" value="P:response to antibiotic"/>
    <property type="evidence" value="ECO:0007669"/>
    <property type="project" value="UniProtKB-KW"/>
</dbReference>
<dbReference type="CDD" id="cd00310">
    <property type="entry name" value="ATP-synt_Fo_a_6"/>
    <property type="match status" value="1"/>
</dbReference>
<dbReference type="Gene3D" id="1.20.120.220">
    <property type="entry name" value="ATP synthase, F0 complex, subunit A"/>
    <property type="match status" value="1"/>
</dbReference>
<dbReference type="HAMAP" id="MF_01393">
    <property type="entry name" value="ATP_synth_a_bact"/>
    <property type="match status" value="1"/>
</dbReference>
<dbReference type="InterPro" id="IPR045082">
    <property type="entry name" value="ATP_syn_F0_a_bact/chloroplast"/>
</dbReference>
<dbReference type="InterPro" id="IPR000568">
    <property type="entry name" value="ATP_synth_F0_asu"/>
</dbReference>
<dbReference type="InterPro" id="IPR035908">
    <property type="entry name" value="F0_ATP_A_sf"/>
</dbReference>
<dbReference type="NCBIfam" id="TIGR01131">
    <property type="entry name" value="ATP_synt_6_or_A"/>
    <property type="match status" value="1"/>
</dbReference>
<dbReference type="NCBIfam" id="NF004479">
    <property type="entry name" value="PRK05815.1-4"/>
    <property type="match status" value="1"/>
</dbReference>
<dbReference type="PANTHER" id="PTHR42823">
    <property type="entry name" value="ATP SYNTHASE SUBUNIT A, CHLOROPLASTIC"/>
    <property type="match status" value="1"/>
</dbReference>
<dbReference type="PANTHER" id="PTHR42823:SF3">
    <property type="entry name" value="ATP SYNTHASE SUBUNIT A, CHLOROPLASTIC"/>
    <property type="match status" value="1"/>
</dbReference>
<dbReference type="Pfam" id="PF00119">
    <property type="entry name" value="ATP-synt_A"/>
    <property type="match status" value="1"/>
</dbReference>
<dbReference type="PRINTS" id="PR00123">
    <property type="entry name" value="ATPASEA"/>
</dbReference>
<dbReference type="SUPFAM" id="SSF81336">
    <property type="entry name" value="F1F0 ATP synthase subunit A"/>
    <property type="match status" value="1"/>
</dbReference>
<reference key="1">
    <citation type="journal article" date="2000" name="Antimicrob. Agents Chemother.">
        <title>Horizontal transfer of parC and gyrA in fluoroquinolone-resistant clinical isolates of Streptococcus pneumoniae.</title>
        <authorList>
            <person name="Ferrandiz M.J."/>
            <person name="Fenoll A."/>
            <person name="Linares J."/>
            <person name="de la Campa A.G."/>
        </authorList>
    </citation>
    <scope>NUCLEOTIDE SEQUENCE [GENOMIC DNA]</scope>
    <source>
        <strain>1244</strain>
        <strain>3180</strain>
        <strain>3870</strain>
    </source>
</reference>
<reference key="2">
    <citation type="journal article" date="2001" name="J. Infect. Dis.">
        <title>Optochin resistance in Streptococcus pneumoniae: mechanism, significance, and clinical implications.</title>
        <authorList>
            <person name="Pikis A."/>
            <person name="Campos J.M."/>
            <person name="Rodriguez W.J."/>
            <person name="Keith J.M."/>
        </authorList>
    </citation>
    <scope>NUCLEOTIDE SEQUENCE [GENOMIC DNA]</scope>
    <source>
        <strain>310</strain>
        <strain>606a/R</strain>
        <strain>606a/S</strain>
        <strain>654/R</strain>
        <strain>654/S</strain>
        <strain>HV109/R</strain>
        <strain>HV109/S</strain>
    </source>
</reference>
<reference key="3">
    <citation type="journal article" date="2001" name="Science">
        <title>Complete genome sequence of a virulent isolate of Streptococcus pneumoniae.</title>
        <authorList>
            <person name="Tettelin H."/>
            <person name="Nelson K.E."/>
            <person name="Paulsen I.T."/>
            <person name="Eisen J.A."/>
            <person name="Read T.D."/>
            <person name="Peterson S.N."/>
            <person name="Heidelberg J.F."/>
            <person name="DeBoy R.T."/>
            <person name="Haft D.H."/>
            <person name="Dodson R.J."/>
            <person name="Durkin A.S."/>
            <person name="Gwinn M.L."/>
            <person name="Kolonay J.F."/>
            <person name="Nelson W.C."/>
            <person name="Peterson J.D."/>
            <person name="Umayam L.A."/>
            <person name="White O."/>
            <person name="Salzberg S.L."/>
            <person name="Lewis M.R."/>
            <person name="Radune D."/>
            <person name="Holtzapple E.K."/>
            <person name="Khouri H.M."/>
            <person name="Wolf A.M."/>
            <person name="Utterback T.R."/>
            <person name="Hansen C.L."/>
            <person name="McDonald L.A."/>
            <person name="Feldblyum T.V."/>
            <person name="Angiuoli S.V."/>
            <person name="Dickinson T."/>
            <person name="Hickey E.K."/>
            <person name="Holt I.E."/>
            <person name="Loftus B.J."/>
            <person name="Yang F."/>
            <person name="Smith H.O."/>
            <person name="Venter J.C."/>
            <person name="Dougherty B.A."/>
            <person name="Morrison D.A."/>
            <person name="Hollingshead S.K."/>
            <person name="Fraser C.M."/>
        </authorList>
    </citation>
    <scope>NUCLEOTIDE SEQUENCE [LARGE SCALE GENOMIC DNA]</scope>
    <source>
        <strain>ATCC BAA-334 / TIGR4</strain>
    </source>
</reference>
<protein>
    <recommendedName>
        <fullName evidence="1">ATP synthase subunit a</fullName>
    </recommendedName>
    <alternativeName>
        <fullName evidence="1">ATP synthase F0 sector subunit a</fullName>
    </alternativeName>
    <alternativeName>
        <fullName evidence="1">F-ATPase subunit 6</fullName>
    </alternativeName>
</protein>
<keyword id="KW-0046">Antibiotic resistance</keyword>
<keyword id="KW-0066">ATP synthesis</keyword>
<keyword id="KW-1003">Cell membrane</keyword>
<keyword id="KW-0138">CF(0)</keyword>
<keyword id="KW-0375">Hydrogen ion transport</keyword>
<keyword id="KW-0406">Ion transport</keyword>
<keyword id="KW-0472">Membrane</keyword>
<keyword id="KW-1185">Reference proteome</keyword>
<keyword id="KW-0812">Transmembrane</keyword>
<keyword id="KW-1133">Transmembrane helix</keyword>
<keyword id="KW-0813">Transport</keyword>
<feature type="chain" id="PRO_0000082072" description="ATP synthase subunit a">
    <location>
        <begin position="1"/>
        <end position="238"/>
    </location>
</feature>
<feature type="transmembrane region" description="Helical" evidence="1">
    <location>
        <begin position="15"/>
        <end position="35"/>
    </location>
</feature>
<feature type="transmembrane region" description="Helical" evidence="1">
    <location>
        <begin position="76"/>
        <end position="96"/>
    </location>
</feature>
<feature type="transmembrane region" description="Helical" evidence="1">
    <location>
        <begin position="111"/>
        <end position="131"/>
    </location>
</feature>
<feature type="transmembrane region" description="Helical" evidence="1">
    <location>
        <begin position="167"/>
        <end position="187"/>
    </location>
</feature>
<feature type="transmembrane region" description="Helical" evidence="1">
    <location>
        <begin position="208"/>
        <end position="230"/>
    </location>
</feature>
<feature type="sequence variant" description="In strain: HV109/R; optochin-resistant.">
    <original>W</original>
    <variation>S</variation>
    <location>
        <position position="206"/>
    </location>
</feature>
<accession>P0A2Y8</accession>
<accession>Q59954</accession>
<accession>Q933D3</accession>
<accession>Q93PE9</accession>
<accession>Q9K3B5</accession>
<organism>
    <name type="scientific">Streptococcus pneumoniae serotype 4 (strain ATCC BAA-334 / TIGR4)</name>
    <dbReference type="NCBI Taxonomy" id="170187"/>
    <lineage>
        <taxon>Bacteria</taxon>
        <taxon>Bacillati</taxon>
        <taxon>Bacillota</taxon>
        <taxon>Bacilli</taxon>
        <taxon>Lactobacillales</taxon>
        <taxon>Streptococcaceae</taxon>
        <taxon>Streptococcus</taxon>
    </lineage>
</organism>
<sequence>MEESINPIISIGPVIFNLTMLAMTLLIVGVIFVFIYWASRNMTLKPKGKQNVLEYVYDFVIGFTEPNIGSRYMKDYSLFFLCLFLFMVIANNLGLMTKLQTIDGTNWWSSPTANLQYDLTLSFLVILLTHIESVRRRGFKKSIKSFMSPVFVIPMNILEEFTNFLSLALRIFGNIFAGEVMTSLLLLLSHQAIYWYPVAFGANLAWTAFSVFISCIQAYVFTLLTSVYLGNKINIEEE</sequence>